<comment type="function">
    <text evidence="4 5 8 11 14">Bifunctional enzyme that catalyzes the last two steps of purine biosynthesis (PubMed:11948179, PubMed:14756554). Acts as a transformylase that incorporates a formyl group to the AMP analog AICAR (5-amino-1-(5-phospho-beta-D-ribosyl)imidazole-4-carboxamide) to produce the intermediate formyl-AICAR (FAICAR) (PubMed:10985775, PubMed:11948179, PubMed:9378707). Can use both 10-formyldihydrofolate and 10-formyltetrahydrofolate as the formyl donor in this reaction (PubMed:10985775). Also catalyzes the cyclization of FAICAR to inosine monophosphate (IMP) (PubMed:11948179, PubMed:14756554). Is able to convert thio-AICAR to 6-mercaptopurine ribonucleotide, an inhibitor of purine biosynthesis used in the treatment of human leukemias (PubMed:10985775). Promotes insulin receptor/INSR autophosphorylation and is involved in INSR internalization (PubMed:25687571).</text>
</comment>
<comment type="catalytic activity">
    <reaction evidence="4 5 14">
        <text>(6R)-10-formyltetrahydrofolate + 5-amino-1-(5-phospho-beta-D-ribosyl)imidazole-4-carboxamide = 5-formamido-1-(5-phospho-D-ribosyl)imidazole-4-carboxamide + (6S)-5,6,7,8-tetrahydrofolate</text>
        <dbReference type="Rhea" id="RHEA:22192"/>
        <dbReference type="ChEBI" id="CHEBI:57453"/>
        <dbReference type="ChEBI" id="CHEBI:58467"/>
        <dbReference type="ChEBI" id="CHEBI:58475"/>
        <dbReference type="ChEBI" id="CHEBI:195366"/>
        <dbReference type="EC" id="2.1.2.3"/>
    </reaction>
    <physiologicalReaction direction="left-to-right" evidence="21 22 26">
        <dbReference type="Rhea" id="RHEA:22193"/>
    </physiologicalReaction>
</comment>
<comment type="catalytic activity">
    <reaction evidence="4">
        <text>10-formyldihydrofolate + 5-amino-1-(5-phospho-beta-D-ribosyl)imidazole-4-carboxamide = 5-formamido-1-(5-phospho-D-ribosyl)imidazole-4-carboxamide + 7,8-dihydrofolate</text>
        <dbReference type="Rhea" id="RHEA:59144"/>
        <dbReference type="ChEBI" id="CHEBI:57451"/>
        <dbReference type="ChEBI" id="CHEBI:57452"/>
        <dbReference type="ChEBI" id="CHEBI:58467"/>
        <dbReference type="ChEBI" id="CHEBI:58475"/>
    </reaction>
    <physiologicalReaction direction="left-to-right" evidence="21">
        <dbReference type="Rhea" id="RHEA:59145"/>
    </physiologicalReaction>
</comment>
<comment type="catalytic activity">
    <reaction evidence="5 8">
        <text>IMP + H2O = 5-formamido-1-(5-phospho-D-ribosyl)imidazole-4-carboxamide</text>
        <dbReference type="Rhea" id="RHEA:18445"/>
        <dbReference type="ChEBI" id="CHEBI:15377"/>
        <dbReference type="ChEBI" id="CHEBI:58053"/>
        <dbReference type="ChEBI" id="CHEBI:58467"/>
        <dbReference type="EC" id="3.5.4.10"/>
    </reaction>
    <physiologicalReaction direction="right-to-left" evidence="22 24">
        <dbReference type="Rhea" id="RHEA:18447"/>
    </physiologicalReaction>
</comment>
<comment type="catalytic activity">
    <reaction evidence="4">
        <text>5-amino-1-(5-phospho-D-ribosyl)imidazole-4-thiocarboxamide + 10-formyldihydrofolate = 6-thio-IMP + 7,8-dihydrofolate + H2O</text>
        <dbReference type="Rhea" id="RHEA:62676"/>
        <dbReference type="ChEBI" id="CHEBI:15377"/>
        <dbReference type="ChEBI" id="CHEBI:57451"/>
        <dbReference type="ChEBI" id="CHEBI:57452"/>
        <dbReference type="ChEBI" id="CHEBI:145873"/>
        <dbReference type="ChEBI" id="CHEBI:145875"/>
    </reaction>
    <physiologicalReaction direction="left-to-right" evidence="21">
        <dbReference type="Rhea" id="RHEA:62677"/>
    </physiologicalReaction>
</comment>
<comment type="activity regulation">
    <text evidence="4 12">AMP and XMP inhibit AICAR formyltransferase activity (PubMed:10985775). AICAR formyltransferase activity is inhibited by N-(6-fluoro-1-oxo-1,2-dihydroisoquinolin-7-yl)-5- [(3R)-3-hydroxypyrrolidin-1-yl]thiophene-2-sulfonamide (LSN 3213128), which acts as a tumor suppression in cancer cell lines (PubMed:29072452).</text>
</comment>
<comment type="biophysicochemical properties">
    <kinetics>
        <KM evidence="5">10 uM for 5-amino-1-(5-phospho-beta-D-ribosyl)imidazole-4-carboxamide (with (6S)-10-formyltetrahydrofolate as cosubstrate)</KM>
        <KM evidence="4">1.5 uM for 5-amino-1-(5-phospho-beta-D-ribosyl)imidazole-4-carboxamide (with 10-formyldihydrofolate as cosubstrate)</KM>
        <KM evidence="4">1.9 uM for 5-amino-1-(5-phospho-beta-D-ribosyl)imidazole-4-carboxamide (with (6S)-10-formyltetrahydrofolate as cosubstrate)</KM>
        <KM evidence="14">110 uM for (6S)-10-formyltetrahydrofolate</KM>
        <KM evidence="5">100 uM for (6S)-10-formyltetrahydrofolate</KM>
        <KM evidence="4">39 uM for (6S)-10-formyltetrahydrofolate</KM>
        <KM evidence="4">11 uM for 10-formyldihydrofolate</KM>
        <KM evidence="5">1.4 uM for 5-formamido-1-(5-phospho-D-ribosyl)imidazole-4-carboxamide</KM>
        <KM evidence="8">0.9 uM for 5-formamido-1-(5-phospho-D-ribosyl)imidazole-4-carboxamide</KM>
        <text evidence="4 5 8">kcat is 3.7 sec(-1) for AICAR formyltransferase activity with (6S)-10-formyltetrahydrofolate as substrate (PubMed:10985775). kcat is 4.1 sec(-1) for AICAR formyltransferase activity with 10-formyldihydrofolate as substrate (PubMed:10985775). kcat is 2.9 sec(-1) for AICAR formyltransferase activity with (6S)-10-formyltetrahydrofolate as substrate (PubMed:11948179). kcat is 6.0 sec(-1) for FAICAR cyclization activity (PubMed:11948179). kcat is 8.6 sec(-1) for FAICAR cyclization activity (PubMed:14756554).</text>
    </kinetics>
</comment>
<comment type="pathway">
    <text evidence="5">Purine metabolism; IMP biosynthesis via de novo pathway; 5-formamido-1-(5-phospho-D-ribosyl)imidazole-4-carboxamide from 5-amino-1-(5-phospho-D-ribosyl)imidazole-4-carboxamide (10-formyl THF route): step 1/1.</text>
</comment>
<comment type="pathway">
    <text evidence="5">Purine metabolism; IMP biosynthesis via de novo pathway; IMP from 5-formamido-1-(5-phospho-D-ribosyl)imidazole-4-carboxamide: step 1/1.</text>
</comment>
<comment type="subunit">
    <text evidence="7 9 11">Homodimer (PubMed:14756553, PubMed:14966129). Associates with internalized INSR complexes on Golgi/endosomal membranes (PubMed:25687571). Interacts with INSR; ATIC together with PRKAA2/AMPK2 and HACD3/PTPLAD1 is proposed to be part of a signaling network regulating INSR autophosphorylation and endocytosis (PubMed:25687571).</text>
</comment>
<comment type="subcellular location">
    <subcellularLocation>
        <location evidence="2">Cytoplasm</location>
        <location evidence="2">Cytosol</location>
    </subcellularLocation>
</comment>
<comment type="alternative products">
    <event type="alternative splicing"/>
    <isoform>
        <id>P31939-1</id>
        <name>1</name>
        <sequence type="displayed"/>
    </isoform>
    <isoform>
        <id>P31939-2</id>
        <name>2</name>
        <sequence type="described" ref="VSP_053495"/>
    </isoform>
</comment>
<comment type="tissue specificity">
    <text evidence="14">Present in the heart, brain, placenta, lung, liver, skeletal muscle, kidney, pancreas.</text>
</comment>
<comment type="domain">
    <text evidence="13">The IMP cyclohydrolase activity resides in the N-terminal region.</text>
</comment>
<comment type="disease" evidence="10">
    <disease id="DI-00065">
        <name>AICA-ribosuria due to ATIC deficiency</name>
        <acronym>AICAR</acronym>
        <description>A neurologically devastating inborn error of purine biosynthesis. Patients excrete massive amounts of AICA-riboside in the urine and accumulate AICA-ribotide and its derivatives in erythrocytes and fibroblasts. Clinical features include profound intellectual disability, epilepsy, dysmorphic features and congenital blindness. AICAR inheritance is autosomal recessive.</description>
        <dbReference type="MIM" id="608688"/>
    </disease>
    <text>The disease is caused by variants affecting the gene represented in this entry.</text>
</comment>
<comment type="miscellaneous">
    <text evidence="16">The de novo purine synthesis pathway includes 10 sequential steps, beginning with phosphoribosyl pyrophosphate and ending with inosine monophosphate (IMP), the first purine compound of the pathway.</text>
</comment>
<comment type="similarity">
    <text evidence="20">Belongs to the PurH family.</text>
</comment>
<comment type="online information" name="Atlas of Genetics and Cytogenetics in Oncology and Haematology">
    <link uri="https://atlasgeneticsoncology.org/gene/227/ATIC"/>
</comment>
<name>PUR9_HUMAN</name>
<feature type="chain" id="PRO_0000192156" description="Bifunctional purine biosynthesis protein ATIC">
    <location>
        <begin position="1"/>
        <end position="592"/>
    </location>
</feature>
<feature type="initiator methionine" description="Removed; alternate" evidence="35">
    <location>
        <position position="1"/>
    </location>
</feature>
<feature type="chain" id="PRO_0000434376" description="Bifunctional purine biosynthesis protein ATIC, N-terminally processed" evidence="14">
    <location>
        <begin position="2"/>
        <end position="592"/>
    </location>
</feature>
<feature type="domain" description="MGS-like" evidence="3">
    <location>
        <begin position="2"/>
        <end position="146"/>
    </location>
</feature>
<feature type="region of interest" description="IMP cyclohydrolase" evidence="1">
    <location>
        <begin position="2"/>
        <end position="198"/>
    </location>
</feature>
<feature type="region of interest" description="AICAR formyltransferase" evidence="1">
    <location>
        <begin position="199"/>
        <end position="592"/>
    </location>
</feature>
<feature type="active site" description="Proton donor/acceptor; for FAICAR cyclization activity" evidence="23">
    <location>
        <position position="137"/>
    </location>
</feature>
<feature type="active site" description="Proton acceptor; for AICAR formyltransferase activity" evidence="25">
    <location>
        <position position="267"/>
    </location>
</feature>
<feature type="binding site" evidence="23 25 28 29 30">
    <location>
        <begin position="12"/>
        <end position="14"/>
    </location>
    <ligand>
        <name>IMP</name>
        <dbReference type="ChEBI" id="CHEBI:58053"/>
    </ligand>
</feature>
<feature type="binding site" evidence="23 25 28 29 30">
    <location>
        <begin position="34"/>
        <end position="37"/>
    </location>
    <ligand>
        <name>IMP</name>
        <dbReference type="ChEBI" id="CHEBI:58053"/>
    </ligand>
</feature>
<feature type="binding site" evidence="23 25 28 29 30">
    <location>
        <begin position="64"/>
        <end position="67"/>
    </location>
    <ligand>
        <name>IMP</name>
        <dbReference type="ChEBI" id="CHEBI:58053"/>
    </ligand>
</feature>
<feature type="binding site" evidence="23 25 28 29 30">
    <location>
        <begin position="101"/>
        <end position="102"/>
    </location>
    <ligand>
        <name>IMP</name>
        <dbReference type="ChEBI" id="CHEBI:58053"/>
    </ligand>
</feature>
<feature type="binding site" evidence="23 25 28 29 30">
    <location>
        <begin position="125"/>
        <end position="126"/>
    </location>
    <ligand>
        <name>IMP</name>
        <dbReference type="ChEBI" id="CHEBI:58053"/>
    </ligand>
</feature>
<feature type="binding site" description="in other chain" evidence="9 28 30">
    <location>
        <begin position="207"/>
        <end position="208"/>
    </location>
    <ligand>
        <name>5-amino-1-(5-phospho-beta-D-ribosyl)imidazole-4-carboxamide</name>
        <dbReference type="ChEBI" id="CHEBI:58475"/>
        <note>ligand shared between dimeric partners</note>
    </ligand>
</feature>
<feature type="binding site" description="in other chain" evidence="9 12 28 30">
    <location>
        <position position="267"/>
    </location>
    <ligand>
        <name>5-amino-1-(5-phospho-beta-D-ribosyl)imidazole-4-carboxamide</name>
        <dbReference type="ChEBI" id="CHEBI:58475"/>
        <note>ligand shared between dimeric partners</note>
    </ligand>
</feature>
<feature type="binding site" description="in other chain" evidence="9 12 28 30">
    <location>
        <position position="316"/>
    </location>
    <ligand>
        <name>5-amino-1-(5-phospho-beta-D-ribosyl)imidazole-4-carboxamide</name>
        <dbReference type="ChEBI" id="CHEBI:58475"/>
        <note>ligand shared between dimeric partners</note>
    </ligand>
</feature>
<feature type="binding site" description="in other chain" evidence="9 12 28 30">
    <location>
        <position position="339"/>
    </location>
    <ligand>
        <name>5-amino-1-(5-phospho-beta-D-ribosyl)imidazole-4-carboxamide</name>
        <dbReference type="ChEBI" id="CHEBI:58475"/>
        <note>ligand shared between dimeric partners</note>
    </ligand>
</feature>
<feature type="binding site" evidence="9 12 28 30">
    <location>
        <position position="431"/>
    </location>
    <ligand>
        <name>5-amino-1-(5-phospho-beta-D-ribosyl)imidazole-4-carboxamide</name>
        <dbReference type="ChEBI" id="CHEBI:58475"/>
        <note>ligand shared between dimeric partners</note>
    </ligand>
</feature>
<feature type="binding site" evidence="9 12 28 30">
    <location>
        <position position="451"/>
    </location>
    <ligand>
        <name>5-amino-1-(5-phospho-beta-D-ribosyl)imidazole-4-carboxamide</name>
        <dbReference type="ChEBI" id="CHEBI:58475"/>
        <note>ligand shared between dimeric partners</note>
    </ligand>
</feature>
<feature type="binding site" evidence="1">
    <location>
        <position position="452"/>
    </location>
    <ligand>
        <name>(6R)-10-formyltetrahydrofolate</name>
        <dbReference type="ChEBI" id="CHEBI:195366"/>
    </ligand>
</feature>
<feature type="binding site" evidence="9 12 28 30">
    <location>
        <position position="541"/>
    </location>
    <ligand>
        <name>5-amino-1-(5-phospho-beta-D-ribosyl)imidazole-4-carboxamide</name>
        <dbReference type="ChEBI" id="CHEBI:58475"/>
        <note>ligand shared between dimeric partners</note>
    </ligand>
</feature>
<feature type="binding site" evidence="1">
    <location>
        <position position="546"/>
    </location>
    <ligand>
        <name>(6R)-10-formyltetrahydrofolate</name>
        <dbReference type="ChEBI" id="CHEBI:195366"/>
    </ligand>
</feature>
<feature type="binding site" evidence="1">
    <location>
        <begin position="565"/>
        <end position="566"/>
    </location>
    <ligand>
        <name>(6R)-10-formyltetrahydrofolate</name>
        <dbReference type="ChEBI" id="CHEBI:195366"/>
    </ligand>
</feature>
<feature type="binding site" evidence="9 12 28 30">
    <location>
        <position position="588"/>
    </location>
    <ligand>
        <name>5-amino-1-(5-phospho-beta-D-ribosyl)imidazole-4-carboxamide</name>
        <dbReference type="ChEBI" id="CHEBI:58475"/>
        <note>ligand shared between dimeric partners</note>
    </ligand>
</feature>
<feature type="site" description="Transition state stabilizer" evidence="25">
    <location>
        <position position="266"/>
    </location>
</feature>
<feature type="modified residue" description="N-acetylmethionine" evidence="33">
    <location>
        <position position="1"/>
    </location>
</feature>
<feature type="modified residue" description="N6-acetyllysine" evidence="34">
    <location>
        <position position="199"/>
    </location>
</feature>
<feature type="splice variant" id="VSP_053495" description="In isoform 2." evidence="17 18">
    <original>MAPGQL</original>
    <variation>MSSLS</variation>
    <location>
        <begin position="1"/>
        <end position="6"/>
    </location>
</feature>
<feature type="sequence variant" id="VAR_019306" description="In dbSNP:rs2372536." evidence="6 15">
    <original>T</original>
    <variation>S</variation>
    <location>
        <position position="116"/>
    </location>
</feature>
<feature type="sequence variant" id="VAR_019307" description="In AICAR; loss of transformylase activity; dbSNP:rs121434478." evidence="10">
    <original>K</original>
    <variation>R</variation>
    <location>
        <position position="426"/>
    </location>
</feature>
<feature type="mutagenesis site" description="Decreased affinity to FAICAR; no change in FAICAR cyclization activity." evidence="8">
    <original>K</original>
    <variation>A</variation>
    <location>
        <position position="66"/>
    </location>
</feature>
<feature type="mutagenesis site" description="Decreased FAICAR cyclization activity; no change in affinity to FAICAR." evidence="8">
    <original>Y</original>
    <variation>A</variation>
    <variation>F</variation>
    <location>
        <position position="104"/>
    </location>
</feature>
<feature type="mutagenesis site" description="Decreased FAICAR cyclization activity; no change in affinity to FAICAR." evidence="8">
    <original>D</original>
    <variation>A</variation>
    <variation>E</variation>
    <variation>N</variation>
    <location>
        <position position="125"/>
    </location>
</feature>
<feature type="mutagenesis site" description="Decreased affinity to FAICAR; no change in FAICAR cyclization activity." evidence="8">
    <original>K</original>
    <variation>A</variation>
    <location>
        <position position="137"/>
    </location>
</feature>
<feature type="mutagenesis site" description="Decreased FAICAR cyclization activity; no change in affinity to FAICAR." evidence="8">
    <original>K</original>
    <variation>R</variation>
    <location>
        <position position="137"/>
    </location>
</feature>
<feature type="mutagenesis site" description="Loss of AICAR transformylase activity." evidence="14">
    <original>H</original>
    <variation>A</variation>
    <location>
        <position position="213"/>
    </location>
</feature>
<feature type="mutagenesis site" description="Loss of AICAR transformylase activity." evidence="14">
    <original>H</original>
    <variation>A</variation>
    <location>
        <position position="267"/>
    </location>
</feature>
<feature type="sequence conflict" description="In Ref. 1; AAA97405." evidence="20" ref="1">
    <original>D</original>
    <variation>G</variation>
    <location>
        <position position="165"/>
    </location>
</feature>
<feature type="strand" evidence="38">
    <location>
        <begin position="6"/>
        <end position="13"/>
    </location>
</feature>
<feature type="helix" evidence="38">
    <location>
        <begin position="17"/>
        <end position="26"/>
    </location>
</feature>
<feature type="strand" evidence="38">
    <location>
        <begin position="30"/>
        <end position="33"/>
    </location>
</feature>
<feature type="helix" evidence="38">
    <location>
        <begin position="35"/>
        <end position="42"/>
    </location>
</feature>
<feature type="turn" evidence="38">
    <location>
        <begin position="43"/>
        <end position="45"/>
    </location>
</feature>
<feature type="helix" evidence="38">
    <location>
        <begin position="51"/>
        <end position="55"/>
    </location>
</feature>
<feature type="helix" evidence="38">
    <location>
        <begin position="61"/>
        <end position="63"/>
    </location>
</feature>
<feature type="strand" evidence="38">
    <location>
        <begin position="65"/>
        <end position="67"/>
    </location>
</feature>
<feature type="helix" evidence="38">
    <location>
        <begin position="70"/>
        <end position="77"/>
    </location>
</feature>
<feature type="helix" evidence="38">
    <location>
        <begin position="82"/>
        <end position="91"/>
    </location>
</feature>
<feature type="strand" evidence="38">
    <location>
        <begin position="96"/>
        <end position="102"/>
    </location>
</feature>
<feature type="helix" evidence="38">
    <location>
        <begin position="106"/>
        <end position="110"/>
    </location>
</feature>
<feature type="helix" evidence="38">
    <location>
        <begin position="117"/>
        <end position="122"/>
    </location>
</feature>
<feature type="helix" evidence="38">
    <location>
        <begin position="127"/>
        <end position="137"/>
    </location>
</feature>
<feature type="turn" evidence="38">
    <location>
        <begin position="138"/>
        <end position="141"/>
    </location>
</feature>
<feature type="strand" evidence="38">
    <location>
        <begin position="143"/>
        <end position="145"/>
    </location>
</feature>
<feature type="helix" evidence="38">
    <location>
        <begin position="148"/>
        <end position="150"/>
    </location>
</feature>
<feature type="helix" evidence="38">
    <location>
        <begin position="151"/>
        <end position="160"/>
    </location>
</feature>
<feature type="strand" evidence="36">
    <location>
        <begin position="161"/>
        <end position="165"/>
    </location>
</feature>
<feature type="helix" evidence="38">
    <location>
        <begin position="168"/>
        <end position="197"/>
    </location>
</feature>
<feature type="turn" evidence="38">
    <location>
        <begin position="200"/>
        <end position="202"/>
    </location>
</feature>
<feature type="strand" evidence="38">
    <location>
        <begin position="203"/>
        <end position="205"/>
    </location>
</feature>
<feature type="strand" evidence="38">
    <location>
        <begin position="209"/>
        <end position="211"/>
    </location>
</feature>
<feature type="strand" evidence="38">
    <location>
        <begin position="217"/>
        <end position="220"/>
    </location>
</feature>
<feature type="strand" evidence="38">
    <location>
        <begin position="222"/>
        <end position="225"/>
    </location>
</feature>
<feature type="strand" evidence="38">
    <location>
        <begin position="227"/>
        <end position="233"/>
    </location>
</feature>
<feature type="helix" evidence="38">
    <location>
        <begin position="237"/>
        <end position="257"/>
    </location>
</feature>
<feature type="strand" evidence="38">
    <location>
        <begin position="261"/>
        <end position="266"/>
    </location>
</feature>
<feature type="strand" evidence="38">
    <location>
        <begin position="269"/>
        <end position="275"/>
    </location>
</feature>
<feature type="helix" evidence="38">
    <location>
        <begin position="281"/>
        <end position="286"/>
    </location>
</feature>
<feature type="helix" evidence="38">
    <location>
        <begin position="290"/>
        <end position="295"/>
    </location>
</feature>
<feature type="helix" evidence="38">
    <location>
        <begin position="298"/>
        <end position="308"/>
    </location>
</feature>
<feature type="turn" evidence="38">
    <location>
        <begin position="309"/>
        <end position="316"/>
    </location>
</feature>
<feature type="strand" evidence="38">
    <location>
        <begin position="317"/>
        <end position="323"/>
    </location>
</feature>
<feature type="helix" evidence="38">
    <location>
        <begin position="327"/>
        <end position="334"/>
    </location>
</feature>
<feature type="strand" evidence="38">
    <location>
        <begin position="338"/>
        <end position="344"/>
    </location>
</feature>
<feature type="helix" evidence="38">
    <location>
        <begin position="348"/>
        <end position="355"/>
    </location>
</feature>
<feature type="helix" evidence="38">
    <location>
        <begin position="358"/>
        <end position="360"/>
    </location>
</feature>
<feature type="strand" evidence="38">
    <location>
        <begin position="363"/>
        <end position="367"/>
    </location>
</feature>
<feature type="strand" evidence="38">
    <location>
        <begin position="375"/>
        <end position="381"/>
    </location>
</feature>
<feature type="strand" evidence="38">
    <location>
        <begin position="384"/>
        <end position="389"/>
    </location>
</feature>
<feature type="helix" evidence="38">
    <location>
        <begin position="397"/>
        <end position="400"/>
    </location>
</feature>
<feature type="helix" evidence="38">
    <location>
        <begin position="412"/>
        <end position="426"/>
    </location>
</feature>
<feature type="strand" evidence="38">
    <location>
        <begin position="433"/>
        <end position="437"/>
    </location>
</feature>
<feature type="strand" evidence="38">
    <location>
        <begin position="440"/>
        <end position="445"/>
    </location>
</feature>
<feature type="helix" evidence="38">
    <location>
        <begin position="451"/>
        <end position="467"/>
    </location>
</feature>
<feature type="helix" evidence="38">
    <location>
        <begin position="471"/>
        <end position="474"/>
    </location>
</feature>
<feature type="helix" evidence="38">
    <location>
        <begin position="484"/>
        <end position="496"/>
    </location>
</feature>
<feature type="helix" evidence="38">
    <location>
        <begin position="502"/>
        <end position="509"/>
    </location>
</feature>
<feature type="strand" evidence="38">
    <location>
        <begin position="512"/>
        <end position="514"/>
    </location>
</feature>
<feature type="helix" evidence="38">
    <location>
        <begin position="521"/>
        <end position="528"/>
    </location>
</feature>
<feature type="strand" evidence="38">
    <location>
        <begin position="534"/>
        <end position="540"/>
    </location>
</feature>
<feature type="strand" evidence="37">
    <location>
        <begin position="543"/>
        <end position="545"/>
    </location>
</feature>
<feature type="helix" evidence="38">
    <location>
        <begin position="546"/>
        <end position="552"/>
    </location>
</feature>
<feature type="turn" evidence="38">
    <location>
        <begin position="553"/>
        <end position="555"/>
    </location>
</feature>
<feature type="strand" evidence="38">
    <location>
        <begin position="556"/>
        <end position="562"/>
    </location>
</feature>
<feature type="helix" evidence="38">
    <location>
        <begin position="568"/>
        <end position="577"/>
    </location>
</feature>
<feature type="strand" evidence="38">
    <location>
        <begin position="581"/>
        <end position="586"/>
    </location>
</feature>
<sequence length="592" mass="64616">MAPGQLALFSVSDKTGLVEFARNLTALGLNLVASGGTAKALRDAGLAVRDVSELTGFPEMLGGRVKTLHPAVHAGILARNIPEDNADMARLDFNLIRVVACNLYPFVKTVASPGVTVEEAVEQIDIGGVTLLRAAAKNHARVTVVCEPEDYVVVSTEMQSSESKDTSLETRRQLALKAFTHTAQYDEAISDYFRKQYSKGVSQMPLRYGMNPHQTPAQLYTLQPKLPITVLNGAPGFINLCDALNAWQLVKELKEALGIPAAASFKHVSPAGAAVGIPLSEDEAKVCMVYDLYKTLTPISAAYARARGADRMSSFGDFVALSDVCDVPTAKIISREVSDGIIAPGYEEEALTILSKKKNGNYCVLQMDQSYKPDENEVRTLFGLHLSQKRNNGVVDKSLFSNVVTKNKDLPESALRDLIVATIAVKYTQSNSVCYAKNGQVIGIGAGQQSRIHCTRLAGDKANYWWLRHHPQVLSMKFKTGVKRAEISNAIDQYVTGTIGEDEDLIKWKALFEEVPELLTEAEKKEWVEKLTEVSISSDAFFPFRDNVDRAKRSGVAYIAAPSGSAADKVVIEACDELGIILAHTNLRLFHH</sequence>
<keyword id="KW-0002">3D-structure</keyword>
<keyword id="KW-0007">Acetylation</keyword>
<keyword id="KW-0025">Alternative splicing</keyword>
<keyword id="KW-0963">Cytoplasm</keyword>
<keyword id="KW-0903">Direct protein sequencing</keyword>
<keyword id="KW-0225">Disease variant</keyword>
<keyword id="KW-0887">Epilepsy</keyword>
<keyword id="KW-0378">Hydrolase</keyword>
<keyword id="KW-0991">Intellectual disability</keyword>
<keyword id="KW-0511">Multifunctional enzyme</keyword>
<keyword id="KW-1267">Proteomics identification</keyword>
<keyword id="KW-0658">Purine biosynthesis</keyword>
<keyword id="KW-1185">Reference proteome</keyword>
<keyword id="KW-0808">Transferase</keyword>
<dbReference type="EC" id="2.1.2.3" evidence="4 5 14"/>
<dbReference type="EC" id="3.5.4.10" evidence="5 8"/>
<dbReference type="EMBL" id="U37436">
    <property type="protein sequence ID" value="AAA97405.1"/>
    <property type="molecule type" value="mRNA"/>
</dbReference>
<dbReference type="EMBL" id="D82348">
    <property type="protein sequence ID" value="BAA11559.1"/>
    <property type="molecule type" value="mRNA"/>
</dbReference>
<dbReference type="EMBL" id="D89976">
    <property type="protein sequence ID" value="BAA21762.1"/>
    <property type="molecule type" value="mRNA"/>
</dbReference>
<dbReference type="EMBL" id="AB062403">
    <property type="protein sequence ID" value="BAB93490.1"/>
    <property type="molecule type" value="mRNA"/>
</dbReference>
<dbReference type="EMBL" id="AK290067">
    <property type="protein sequence ID" value="BAF82756.1"/>
    <property type="molecule type" value="mRNA"/>
</dbReference>
<dbReference type="EMBL" id="AC073284">
    <property type="protein sequence ID" value="AAY24062.1"/>
    <property type="molecule type" value="Genomic_DNA"/>
</dbReference>
<dbReference type="EMBL" id="CH471063">
    <property type="protein sequence ID" value="EAW70529.1"/>
    <property type="molecule type" value="Genomic_DNA"/>
</dbReference>
<dbReference type="EMBL" id="BC008879">
    <property type="protein sequence ID" value="AAH08879.1"/>
    <property type="molecule type" value="mRNA"/>
</dbReference>
<dbReference type="CCDS" id="CCDS2398.1">
    <molecule id="P31939-1"/>
</dbReference>
<dbReference type="PIR" id="JC4642">
    <property type="entry name" value="JC4642"/>
</dbReference>
<dbReference type="RefSeq" id="NP_004035.2">
    <molecule id="P31939-1"/>
    <property type="nucleotide sequence ID" value="NM_004044.6"/>
</dbReference>
<dbReference type="PDB" id="1P4R">
    <property type="method" value="X-ray"/>
    <property type="resolution" value="2.55 A"/>
    <property type="chains" value="A/B=1-592"/>
</dbReference>
<dbReference type="PDB" id="1PKX">
    <property type="method" value="X-ray"/>
    <property type="resolution" value="1.90 A"/>
    <property type="chains" value="A/B/C/D=1-592"/>
</dbReference>
<dbReference type="PDB" id="1PL0">
    <property type="method" value="X-ray"/>
    <property type="resolution" value="2.60 A"/>
    <property type="chains" value="A/B/C/D=1-592"/>
</dbReference>
<dbReference type="PDB" id="5UY8">
    <property type="method" value="X-ray"/>
    <property type="resolution" value="2.39 A"/>
    <property type="chains" value="A/B/C/D=2-592"/>
</dbReference>
<dbReference type="PDB" id="5UZ0">
    <property type="method" value="X-ray"/>
    <property type="resolution" value="1.79 A"/>
    <property type="chains" value="A/B/C/D=2-592"/>
</dbReference>
<dbReference type="PDBsum" id="1P4R"/>
<dbReference type="PDBsum" id="1PKX"/>
<dbReference type="PDBsum" id="1PL0"/>
<dbReference type="PDBsum" id="5UY8"/>
<dbReference type="PDBsum" id="5UZ0"/>
<dbReference type="SMR" id="P31939"/>
<dbReference type="BioGRID" id="106961">
    <property type="interactions" value="160"/>
</dbReference>
<dbReference type="FunCoup" id="P31939">
    <property type="interactions" value="2053"/>
</dbReference>
<dbReference type="IntAct" id="P31939">
    <property type="interactions" value="31"/>
</dbReference>
<dbReference type="MINT" id="P31939"/>
<dbReference type="STRING" id="9606.ENSP00000236959"/>
<dbReference type="BindingDB" id="P31939"/>
<dbReference type="ChEMBL" id="CHEMBL2518"/>
<dbReference type="DrugBank" id="DB02309">
    <property type="generic name" value="5-monophosphate-9-beta-D-ribofuranosyl xanthine"/>
</dbReference>
<dbReference type="DrugBank" id="DB03442">
    <property type="generic name" value="Acid yellow 54 free acid"/>
</dbReference>
<dbReference type="DrugBank" id="DB01700">
    <property type="generic name" value="AICA ribonucleotide"/>
</dbReference>
<dbReference type="DrugBank" id="DB01972">
    <property type="generic name" value="Guanosine-5'-Monophosphate"/>
</dbReference>
<dbReference type="DrugBank" id="DB00563">
    <property type="generic name" value="Methotrexate"/>
</dbReference>
<dbReference type="DrugBank" id="DB04057">
    <property type="generic name" value="N-[4-([(2-Amino-4-oxo-1,4-dihydropyrido[3,2-d]pyrimidin-6-yl)methyl]{(2E)-3-[4-carbamoyl-1-(5-O-phosphono-beta-D-ribofuranosyl)-1H-imidazol-5-yl]-2-propenoyl}amino)benzoyl]-L-glutamic acid"/>
</dbReference>
<dbReference type="DrugBank" id="DB00642">
    <property type="generic name" value="Pemetrexed"/>
</dbReference>
<dbReference type="DrugBank" id="DB00116">
    <property type="generic name" value="Tetrahydrofolic acid"/>
</dbReference>
<dbReference type="DrugCentral" id="P31939"/>
<dbReference type="GlyGen" id="P31939">
    <property type="glycosylation" value="2 sites, 1 N-linked glycan (1 site), 1 O-linked glycan (1 site)"/>
</dbReference>
<dbReference type="iPTMnet" id="P31939"/>
<dbReference type="MetOSite" id="P31939"/>
<dbReference type="PhosphoSitePlus" id="P31939"/>
<dbReference type="SwissPalm" id="P31939"/>
<dbReference type="BioMuta" id="ATIC"/>
<dbReference type="DMDM" id="23831360"/>
<dbReference type="REPRODUCTION-2DPAGE" id="IPI00289499"/>
<dbReference type="jPOST" id="P31939"/>
<dbReference type="MassIVE" id="P31939"/>
<dbReference type="PaxDb" id="9606-ENSP00000236959"/>
<dbReference type="PeptideAtlas" id="P31939"/>
<dbReference type="ProteomicsDB" id="19298"/>
<dbReference type="ProteomicsDB" id="54805">
    <molecule id="P31939-1"/>
</dbReference>
<dbReference type="Pumba" id="P31939"/>
<dbReference type="Antibodypedia" id="4601">
    <property type="antibodies" value="423 antibodies from 37 providers"/>
</dbReference>
<dbReference type="DNASU" id="471"/>
<dbReference type="Ensembl" id="ENST00000236959.14">
    <molecule id="P31939-1"/>
    <property type="protein sequence ID" value="ENSP00000236959.9"/>
    <property type="gene ID" value="ENSG00000138363.15"/>
</dbReference>
<dbReference type="Ensembl" id="ENST00000435675.5">
    <molecule id="P31939-2"/>
    <property type="protein sequence ID" value="ENSP00000415935.1"/>
    <property type="gene ID" value="ENSG00000138363.15"/>
</dbReference>
<dbReference type="GeneID" id="471"/>
<dbReference type="KEGG" id="hsa:471"/>
<dbReference type="MANE-Select" id="ENST00000236959.14">
    <property type="protein sequence ID" value="ENSP00000236959.9"/>
    <property type="RefSeq nucleotide sequence ID" value="NM_004044.7"/>
    <property type="RefSeq protein sequence ID" value="NP_004035.2"/>
</dbReference>
<dbReference type="UCSC" id="uc002vey.5">
    <molecule id="P31939-1"/>
    <property type="organism name" value="human"/>
</dbReference>
<dbReference type="AGR" id="HGNC:794"/>
<dbReference type="CTD" id="471"/>
<dbReference type="DisGeNET" id="471"/>
<dbReference type="GeneCards" id="ATIC"/>
<dbReference type="HGNC" id="HGNC:794">
    <property type="gene designation" value="ATIC"/>
</dbReference>
<dbReference type="HPA" id="ENSG00000138363">
    <property type="expression patterns" value="Low tissue specificity"/>
</dbReference>
<dbReference type="MalaCards" id="ATIC"/>
<dbReference type="MIM" id="601731">
    <property type="type" value="gene"/>
</dbReference>
<dbReference type="MIM" id="608688">
    <property type="type" value="phenotype"/>
</dbReference>
<dbReference type="neXtProt" id="NX_P31939"/>
<dbReference type="OpenTargets" id="ENSG00000138363"/>
<dbReference type="Orphanet" id="250977">
    <property type="disease" value="AICA-ribosiduria"/>
</dbReference>
<dbReference type="PharmGKB" id="PA25094"/>
<dbReference type="VEuPathDB" id="HostDB:ENSG00000138363"/>
<dbReference type="eggNOG" id="KOG2555">
    <property type="taxonomic scope" value="Eukaryota"/>
</dbReference>
<dbReference type="GeneTree" id="ENSGT00390000004553"/>
<dbReference type="HOGENOM" id="CLU_016316_3_2_1"/>
<dbReference type="InParanoid" id="P31939"/>
<dbReference type="OMA" id="IKHNNPC"/>
<dbReference type="OrthoDB" id="6017153at2759"/>
<dbReference type="PAN-GO" id="P31939">
    <property type="GO annotations" value="4 GO annotations based on evolutionary models"/>
</dbReference>
<dbReference type="PhylomeDB" id="P31939"/>
<dbReference type="TreeFam" id="TF105642"/>
<dbReference type="BioCyc" id="MetaCyc:HS06490-MONOMER"/>
<dbReference type="BRENDA" id="2.1.2.3">
    <property type="organism ID" value="2681"/>
</dbReference>
<dbReference type="BRENDA" id="3.5.4.10">
    <property type="organism ID" value="2681"/>
</dbReference>
<dbReference type="PathwayCommons" id="P31939"/>
<dbReference type="Reactome" id="R-HSA-73817">
    <property type="pathway name" value="Purine ribonucleoside monophosphate biosynthesis"/>
</dbReference>
<dbReference type="Reactome" id="R-HSA-9725370">
    <property type="pathway name" value="Signaling by ALK fusions and activated point mutants"/>
</dbReference>
<dbReference type="SABIO-RK" id="P31939"/>
<dbReference type="SignaLink" id="P31939"/>
<dbReference type="SIGNOR" id="P31939"/>
<dbReference type="UniPathway" id="UPA00074">
    <property type="reaction ID" value="UER00133"/>
</dbReference>
<dbReference type="UniPathway" id="UPA00074">
    <property type="reaction ID" value="UER00135"/>
</dbReference>
<dbReference type="BioGRID-ORCS" id="471">
    <property type="hits" value="225 hits in 1173 CRISPR screens"/>
</dbReference>
<dbReference type="CD-CODE" id="FB4E32DD">
    <property type="entry name" value="Presynaptic clusters and postsynaptic densities"/>
</dbReference>
<dbReference type="ChiTaRS" id="ATIC">
    <property type="organism name" value="human"/>
</dbReference>
<dbReference type="EvolutionaryTrace" id="P31939"/>
<dbReference type="GeneWiki" id="Inosine_monophosphate_synthase"/>
<dbReference type="GenomeRNAi" id="471"/>
<dbReference type="Pharos" id="P31939">
    <property type="development level" value="Tchem"/>
</dbReference>
<dbReference type="PRO" id="PR:P31939"/>
<dbReference type="Proteomes" id="UP000005640">
    <property type="component" value="Chromosome 2"/>
</dbReference>
<dbReference type="RNAct" id="P31939">
    <property type="molecule type" value="protein"/>
</dbReference>
<dbReference type="Bgee" id="ENSG00000138363">
    <property type="expression patterns" value="Expressed in mucosa of transverse colon and 201 other cell types or tissues"/>
</dbReference>
<dbReference type="ExpressionAtlas" id="P31939">
    <property type="expression patterns" value="baseline and differential"/>
</dbReference>
<dbReference type="GO" id="GO:0005829">
    <property type="term" value="C:cytosol"/>
    <property type="evidence" value="ECO:0000314"/>
    <property type="project" value="HPA"/>
</dbReference>
<dbReference type="GO" id="GO:0070062">
    <property type="term" value="C:extracellular exosome"/>
    <property type="evidence" value="ECO:0007005"/>
    <property type="project" value="UniProtKB"/>
</dbReference>
<dbReference type="GO" id="GO:0016020">
    <property type="term" value="C:membrane"/>
    <property type="evidence" value="ECO:0007005"/>
    <property type="project" value="UniProtKB"/>
</dbReference>
<dbReference type="GO" id="GO:0005886">
    <property type="term" value="C:plasma membrane"/>
    <property type="evidence" value="ECO:0000314"/>
    <property type="project" value="HPA"/>
</dbReference>
<dbReference type="GO" id="GO:0045296">
    <property type="term" value="F:cadherin binding"/>
    <property type="evidence" value="ECO:0007005"/>
    <property type="project" value="BHF-UCL"/>
</dbReference>
<dbReference type="GO" id="GO:0003937">
    <property type="term" value="F:IMP cyclohydrolase activity"/>
    <property type="evidence" value="ECO:0000314"/>
    <property type="project" value="MGI"/>
</dbReference>
<dbReference type="GO" id="GO:0004643">
    <property type="term" value="F:phosphoribosylaminoimidazolecarboxamide formyltransferase activity"/>
    <property type="evidence" value="ECO:0000318"/>
    <property type="project" value="GO_Central"/>
</dbReference>
<dbReference type="GO" id="GO:0042803">
    <property type="term" value="F:protein homodimerization activity"/>
    <property type="evidence" value="ECO:0000353"/>
    <property type="project" value="UniProtKB"/>
</dbReference>
<dbReference type="GO" id="GO:0044208">
    <property type="term" value="P:'de novo' AMP biosynthetic process"/>
    <property type="evidence" value="ECO:0000314"/>
    <property type="project" value="MGI"/>
</dbReference>
<dbReference type="GO" id="GO:0006189">
    <property type="term" value="P:'de novo' IMP biosynthetic process"/>
    <property type="evidence" value="ECO:0000314"/>
    <property type="project" value="MGI"/>
</dbReference>
<dbReference type="GO" id="GO:0097294">
    <property type="term" value="P:'de novo' XMP biosynthetic process"/>
    <property type="evidence" value="ECO:0000314"/>
    <property type="project" value="MGI"/>
</dbReference>
<dbReference type="GO" id="GO:0031100">
    <property type="term" value="P:animal organ regeneration"/>
    <property type="evidence" value="ECO:0007669"/>
    <property type="project" value="Ensembl"/>
</dbReference>
<dbReference type="GO" id="GO:0003360">
    <property type="term" value="P:brainstem development"/>
    <property type="evidence" value="ECO:0007669"/>
    <property type="project" value="Ensembl"/>
</dbReference>
<dbReference type="GO" id="GO:0098761">
    <property type="term" value="P:cellular response to interleukin-7"/>
    <property type="evidence" value="ECO:0007669"/>
    <property type="project" value="Ensembl"/>
</dbReference>
<dbReference type="GO" id="GO:0021549">
    <property type="term" value="P:cerebellum development"/>
    <property type="evidence" value="ECO:0007669"/>
    <property type="project" value="Ensembl"/>
</dbReference>
<dbReference type="GO" id="GO:0021987">
    <property type="term" value="P:cerebral cortex development"/>
    <property type="evidence" value="ECO:0007669"/>
    <property type="project" value="Ensembl"/>
</dbReference>
<dbReference type="GO" id="GO:0046452">
    <property type="term" value="P:dihydrofolate metabolic process"/>
    <property type="evidence" value="ECO:0007669"/>
    <property type="project" value="Ensembl"/>
</dbReference>
<dbReference type="GO" id="GO:0006177">
    <property type="term" value="P:GMP biosynthetic process"/>
    <property type="evidence" value="ECO:0000314"/>
    <property type="project" value="MGI"/>
</dbReference>
<dbReference type="GO" id="GO:0006139">
    <property type="term" value="P:nucleobase-containing compound metabolic process"/>
    <property type="evidence" value="ECO:0000304"/>
    <property type="project" value="ProtInc"/>
</dbReference>
<dbReference type="GO" id="GO:0046654">
    <property type="term" value="P:tetrahydrofolate biosynthetic process"/>
    <property type="evidence" value="ECO:0007669"/>
    <property type="project" value="Ensembl"/>
</dbReference>
<dbReference type="CDD" id="cd01421">
    <property type="entry name" value="IMPCH"/>
    <property type="match status" value="1"/>
</dbReference>
<dbReference type="FunFam" id="3.40.50.1380:FF:000003">
    <property type="entry name" value="Bifunctional purine biosynthesis protein"/>
    <property type="match status" value="1"/>
</dbReference>
<dbReference type="FunFam" id="1.10.287.440:FF:000001">
    <property type="entry name" value="Bifunctional purine biosynthesis protein PURH"/>
    <property type="match status" value="1"/>
</dbReference>
<dbReference type="FunFam" id="3.40.140.20:FF:000008">
    <property type="entry name" value="Bifunctional purine biosynthesis protein PURH"/>
    <property type="match status" value="1"/>
</dbReference>
<dbReference type="Gene3D" id="1.10.287.440">
    <property type="match status" value="1"/>
</dbReference>
<dbReference type="Gene3D" id="3.40.140.20">
    <property type="match status" value="2"/>
</dbReference>
<dbReference type="Gene3D" id="3.40.50.1380">
    <property type="entry name" value="Methylglyoxal synthase-like domain"/>
    <property type="match status" value="1"/>
</dbReference>
<dbReference type="HAMAP" id="MF_00139">
    <property type="entry name" value="PurH"/>
    <property type="match status" value="1"/>
</dbReference>
<dbReference type="InterPro" id="IPR024051">
    <property type="entry name" value="AICAR_Tfase_dup_dom_sf"/>
</dbReference>
<dbReference type="InterPro" id="IPR024050">
    <property type="entry name" value="AICAR_Tfase_insert_dom_sf"/>
</dbReference>
<dbReference type="InterPro" id="IPR016193">
    <property type="entry name" value="Cytidine_deaminase-like"/>
</dbReference>
<dbReference type="InterPro" id="IPR011607">
    <property type="entry name" value="MGS-like_dom"/>
</dbReference>
<dbReference type="InterPro" id="IPR036914">
    <property type="entry name" value="MGS-like_dom_sf"/>
</dbReference>
<dbReference type="InterPro" id="IPR002695">
    <property type="entry name" value="PurH-like"/>
</dbReference>
<dbReference type="NCBIfam" id="NF005492">
    <property type="entry name" value="PRK07106.1"/>
    <property type="match status" value="1"/>
</dbReference>
<dbReference type="NCBIfam" id="TIGR00355">
    <property type="entry name" value="purH"/>
    <property type="match status" value="1"/>
</dbReference>
<dbReference type="PANTHER" id="PTHR11692:SF0">
    <property type="entry name" value="BIFUNCTIONAL PURINE BIOSYNTHESIS PROTEIN ATIC"/>
    <property type="match status" value="1"/>
</dbReference>
<dbReference type="PANTHER" id="PTHR11692">
    <property type="entry name" value="BIFUNCTIONAL PURINE BIOSYNTHESIS PROTEIN PURH"/>
    <property type="match status" value="1"/>
</dbReference>
<dbReference type="Pfam" id="PF01808">
    <property type="entry name" value="AICARFT_IMPCHas"/>
    <property type="match status" value="1"/>
</dbReference>
<dbReference type="Pfam" id="PF02142">
    <property type="entry name" value="MGS"/>
    <property type="match status" value="1"/>
</dbReference>
<dbReference type="PIRSF" id="PIRSF000414">
    <property type="entry name" value="AICARFT_IMPCHas"/>
    <property type="match status" value="1"/>
</dbReference>
<dbReference type="SMART" id="SM00798">
    <property type="entry name" value="AICARFT_IMPCHas"/>
    <property type="match status" value="1"/>
</dbReference>
<dbReference type="SMART" id="SM00851">
    <property type="entry name" value="MGS"/>
    <property type="match status" value="1"/>
</dbReference>
<dbReference type="SUPFAM" id="SSF53927">
    <property type="entry name" value="Cytidine deaminase-like"/>
    <property type="match status" value="1"/>
</dbReference>
<dbReference type="SUPFAM" id="SSF52335">
    <property type="entry name" value="Methylglyoxal synthase-like"/>
    <property type="match status" value="1"/>
</dbReference>
<dbReference type="PROSITE" id="PS51855">
    <property type="entry name" value="MGS"/>
    <property type="match status" value="1"/>
</dbReference>
<protein>
    <recommendedName>
        <fullName>Bifunctional purine biosynthesis protein ATIC</fullName>
    </recommendedName>
    <alternativeName>
        <fullName>AICAR transformylase/inosine monophosphate cyclohydrolase</fullName>
        <shortName>ATIC</shortName>
    </alternativeName>
    <domain>
        <recommendedName>
            <fullName>Phosphoribosylaminoimidazolecarboxamide formyltransferase</fullName>
            <ecNumber evidence="4 5 14">2.1.2.3</ecNumber>
        </recommendedName>
        <alternativeName>
            <fullName evidence="19">5-aminoimidazole-4-carboxamide ribonucleotide formyltransferase</fullName>
            <shortName evidence="19">AICAR formyltransferase</shortName>
        </alternativeName>
        <alternativeName>
            <fullName>AICAR transformylase</fullName>
        </alternativeName>
    </domain>
    <domain>
        <recommendedName>
            <fullName evidence="16">Inosine 5'-monophosphate cyclohydrolase</fullName>
            <shortName evidence="16">IMP cyclohydrolase</shortName>
            <ecNumber evidence="5 8">3.5.4.10</ecNumber>
        </recommendedName>
        <alternativeName>
            <fullName>IMP synthase</fullName>
        </alternativeName>
        <alternativeName>
            <fullName>Inosinicase</fullName>
        </alternativeName>
    </domain>
    <component>
        <recommendedName>
            <fullName>Bifunctional purine biosynthesis protein ATIC, N-terminally processed</fullName>
        </recommendedName>
    </component>
</protein>
<organism>
    <name type="scientific">Homo sapiens</name>
    <name type="common">Human</name>
    <dbReference type="NCBI Taxonomy" id="9606"/>
    <lineage>
        <taxon>Eukaryota</taxon>
        <taxon>Metazoa</taxon>
        <taxon>Chordata</taxon>
        <taxon>Craniata</taxon>
        <taxon>Vertebrata</taxon>
        <taxon>Euteleostomi</taxon>
        <taxon>Mammalia</taxon>
        <taxon>Eutheria</taxon>
        <taxon>Euarchontoglires</taxon>
        <taxon>Primates</taxon>
        <taxon>Haplorrhini</taxon>
        <taxon>Catarrhini</taxon>
        <taxon>Hominidae</taxon>
        <taxon>Homo</taxon>
    </lineage>
</organism>
<proteinExistence type="evidence at protein level"/>
<reference key="1">
    <citation type="journal article" date="1996" name="J. Biol. Chem.">
        <title>The human purH gene product, 5-aminoimidazole-4-carboxamide ribonucleotide formyltransferase/IMP cyclohydrolase. Cloning, sequencing, expression, purification, kinetic analysis, and domain mapping.</title>
        <authorList>
            <person name="Rayl E.A."/>
            <person name="Moroson B.A."/>
            <person name="Beardsley G.P."/>
        </authorList>
    </citation>
    <scope>NUCLEOTIDE SEQUENCE [MRNA] (ISOFORM 2)</scope>
    <scope>DOMAIN</scope>
    <source>
        <tissue>Hepatoma</tissue>
    </source>
</reference>
<reference key="2">
    <citation type="journal article" date="1995" name="DNA Res.">
        <title>Isolation of human purH gene expressed in the rodent transformant cells by subtractive enrichment of 3'-untranslated region of human transcript.</title>
        <authorList>
            <person name="Yamauchi M."/>
            <person name="Seki N."/>
            <person name="Mita K."/>
            <person name="Saito T."/>
            <person name="Tsuji S."/>
            <person name="Hongo E."/>
            <person name="Morimyo M."/>
            <person name="Shiomi T."/>
            <person name="Koyama H."/>
        </authorList>
    </citation>
    <scope>NUCLEOTIDE SEQUENCE [MRNA] (ISOFORM 1)</scope>
    <source>
        <tissue>Testis</tissue>
    </source>
</reference>
<reference key="3">
    <citation type="journal article" date="1997" name="J. Biochem.">
        <title>Characterization of molecularly cloned human 5-aminoimidazole-4-carboxamide ribonucleotide transformylase.</title>
        <authorList>
            <person name="Sugita T."/>
            <person name="Aya H."/>
            <person name="Ueno M."/>
            <person name="Ishizuka T."/>
            <person name="Kawashima K."/>
        </authorList>
    </citation>
    <scope>NUCLEOTIDE SEQUENCE [MRNA] (ISOFORM 1)</scope>
    <scope>PROTEIN SEQUENCE OF 2-9</scope>
    <scope>FUNCTION</scope>
    <scope>TISSUE SPECIFICITY</scope>
    <scope>BIOPHYSICOCHEMICAL PROPERTIES</scope>
    <scope>CATALYTIC ACTIVITY</scope>
    <scope>MUTAGENESIS OF HIS-213 AND HIS-267</scope>
    <source>
        <tissue>Placenta</tissue>
    </source>
</reference>
<reference key="4">
    <citation type="submission" date="2001-05" db="EMBL/GenBank/DDBJ databases">
        <title>Identification of immuno-peptidmics that are recognized by tumor-reactive CTL generated from TIL of colon cancer patients.</title>
        <authorList>
            <person name="Shichijo S."/>
            <person name="Itoh K."/>
        </authorList>
    </citation>
    <scope>NUCLEOTIDE SEQUENCE [LARGE SCALE MRNA] (ISOFORM 1)</scope>
    <source>
        <tissue>Colon adenocarcinoma</tissue>
    </source>
</reference>
<reference key="5">
    <citation type="journal article" date="2004" name="Nat. Genet.">
        <title>Complete sequencing and characterization of 21,243 full-length human cDNAs.</title>
        <authorList>
            <person name="Ota T."/>
            <person name="Suzuki Y."/>
            <person name="Nishikawa T."/>
            <person name="Otsuki T."/>
            <person name="Sugiyama T."/>
            <person name="Irie R."/>
            <person name="Wakamatsu A."/>
            <person name="Hayashi K."/>
            <person name="Sato H."/>
            <person name="Nagai K."/>
            <person name="Kimura K."/>
            <person name="Makita H."/>
            <person name="Sekine M."/>
            <person name="Obayashi M."/>
            <person name="Nishi T."/>
            <person name="Shibahara T."/>
            <person name="Tanaka T."/>
            <person name="Ishii S."/>
            <person name="Yamamoto J."/>
            <person name="Saito K."/>
            <person name="Kawai Y."/>
            <person name="Isono Y."/>
            <person name="Nakamura Y."/>
            <person name="Nagahari K."/>
            <person name="Murakami K."/>
            <person name="Yasuda T."/>
            <person name="Iwayanagi T."/>
            <person name="Wagatsuma M."/>
            <person name="Shiratori A."/>
            <person name="Sudo H."/>
            <person name="Hosoiri T."/>
            <person name="Kaku Y."/>
            <person name="Kodaira H."/>
            <person name="Kondo H."/>
            <person name="Sugawara M."/>
            <person name="Takahashi M."/>
            <person name="Kanda K."/>
            <person name="Yokoi T."/>
            <person name="Furuya T."/>
            <person name="Kikkawa E."/>
            <person name="Omura Y."/>
            <person name="Abe K."/>
            <person name="Kamihara K."/>
            <person name="Katsuta N."/>
            <person name="Sato K."/>
            <person name="Tanikawa M."/>
            <person name="Yamazaki M."/>
            <person name="Ninomiya K."/>
            <person name="Ishibashi T."/>
            <person name="Yamashita H."/>
            <person name="Murakawa K."/>
            <person name="Fujimori K."/>
            <person name="Tanai H."/>
            <person name="Kimata M."/>
            <person name="Watanabe M."/>
            <person name="Hiraoka S."/>
            <person name="Chiba Y."/>
            <person name="Ishida S."/>
            <person name="Ono Y."/>
            <person name="Takiguchi S."/>
            <person name="Watanabe S."/>
            <person name="Yosida M."/>
            <person name="Hotuta T."/>
            <person name="Kusano J."/>
            <person name="Kanehori K."/>
            <person name="Takahashi-Fujii A."/>
            <person name="Hara H."/>
            <person name="Tanase T.-O."/>
            <person name="Nomura Y."/>
            <person name="Togiya S."/>
            <person name="Komai F."/>
            <person name="Hara R."/>
            <person name="Takeuchi K."/>
            <person name="Arita M."/>
            <person name="Imose N."/>
            <person name="Musashino K."/>
            <person name="Yuuki H."/>
            <person name="Oshima A."/>
            <person name="Sasaki N."/>
            <person name="Aotsuka S."/>
            <person name="Yoshikawa Y."/>
            <person name="Matsunawa H."/>
            <person name="Ichihara T."/>
            <person name="Shiohata N."/>
            <person name="Sano S."/>
            <person name="Moriya S."/>
            <person name="Momiyama H."/>
            <person name="Satoh N."/>
            <person name="Takami S."/>
            <person name="Terashima Y."/>
            <person name="Suzuki O."/>
            <person name="Nakagawa S."/>
            <person name="Senoh A."/>
            <person name="Mizoguchi H."/>
            <person name="Goto Y."/>
            <person name="Shimizu F."/>
            <person name="Wakebe H."/>
            <person name="Hishigaki H."/>
            <person name="Watanabe T."/>
            <person name="Sugiyama A."/>
            <person name="Takemoto M."/>
            <person name="Kawakami B."/>
            <person name="Yamazaki M."/>
            <person name="Watanabe K."/>
            <person name="Kumagai A."/>
            <person name="Itakura S."/>
            <person name="Fukuzumi Y."/>
            <person name="Fujimori Y."/>
            <person name="Komiyama M."/>
            <person name="Tashiro H."/>
            <person name="Tanigami A."/>
            <person name="Fujiwara T."/>
            <person name="Ono T."/>
            <person name="Yamada K."/>
            <person name="Fujii Y."/>
            <person name="Ozaki K."/>
            <person name="Hirao M."/>
            <person name="Ohmori Y."/>
            <person name="Kawabata A."/>
            <person name="Hikiji T."/>
            <person name="Kobatake N."/>
            <person name="Inagaki H."/>
            <person name="Ikema Y."/>
            <person name="Okamoto S."/>
            <person name="Okitani R."/>
            <person name="Kawakami T."/>
            <person name="Noguchi S."/>
            <person name="Itoh T."/>
            <person name="Shigeta K."/>
            <person name="Senba T."/>
            <person name="Matsumura K."/>
            <person name="Nakajima Y."/>
            <person name="Mizuno T."/>
            <person name="Morinaga M."/>
            <person name="Sasaki M."/>
            <person name="Togashi T."/>
            <person name="Oyama M."/>
            <person name="Hata H."/>
            <person name="Watanabe M."/>
            <person name="Komatsu T."/>
            <person name="Mizushima-Sugano J."/>
            <person name="Satoh T."/>
            <person name="Shirai Y."/>
            <person name="Takahashi Y."/>
            <person name="Nakagawa K."/>
            <person name="Okumura K."/>
            <person name="Nagase T."/>
            <person name="Nomura N."/>
            <person name="Kikuchi H."/>
            <person name="Masuho Y."/>
            <person name="Yamashita R."/>
            <person name="Nakai K."/>
            <person name="Yada T."/>
            <person name="Nakamura Y."/>
            <person name="Ohara O."/>
            <person name="Isogai T."/>
            <person name="Sugano S."/>
        </authorList>
    </citation>
    <scope>NUCLEOTIDE SEQUENCE [LARGE SCALE MRNA] (ISOFORM 2)</scope>
    <scope>VARIANT SER-116</scope>
    <source>
        <tissue>Substantia nigra</tissue>
    </source>
</reference>
<reference key="6">
    <citation type="journal article" date="2005" name="Nature">
        <title>Generation and annotation of the DNA sequences of human chromosomes 2 and 4.</title>
        <authorList>
            <person name="Hillier L.W."/>
            <person name="Graves T.A."/>
            <person name="Fulton R.S."/>
            <person name="Fulton L.A."/>
            <person name="Pepin K.H."/>
            <person name="Minx P."/>
            <person name="Wagner-McPherson C."/>
            <person name="Layman D."/>
            <person name="Wylie K."/>
            <person name="Sekhon M."/>
            <person name="Becker M.C."/>
            <person name="Fewell G.A."/>
            <person name="Delehaunty K.D."/>
            <person name="Miner T.L."/>
            <person name="Nash W.E."/>
            <person name="Kremitzki C."/>
            <person name="Oddy L."/>
            <person name="Du H."/>
            <person name="Sun H."/>
            <person name="Bradshaw-Cordum H."/>
            <person name="Ali J."/>
            <person name="Carter J."/>
            <person name="Cordes M."/>
            <person name="Harris A."/>
            <person name="Isak A."/>
            <person name="van Brunt A."/>
            <person name="Nguyen C."/>
            <person name="Du F."/>
            <person name="Courtney L."/>
            <person name="Kalicki J."/>
            <person name="Ozersky P."/>
            <person name="Abbott S."/>
            <person name="Armstrong J."/>
            <person name="Belter E.A."/>
            <person name="Caruso L."/>
            <person name="Cedroni M."/>
            <person name="Cotton M."/>
            <person name="Davidson T."/>
            <person name="Desai A."/>
            <person name="Elliott G."/>
            <person name="Erb T."/>
            <person name="Fronick C."/>
            <person name="Gaige T."/>
            <person name="Haakenson W."/>
            <person name="Haglund K."/>
            <person name="Holmes A."/>
            <person name="Harkins R."/>
            <person name="Kim K."/>
            <person name="Kruchowski S.S."/>
            <person name="Strong C.M."/>
            <person name="Grewal N."/>
            <person name="Goyea E."/>
            <person name="Hou S."/>
            <person name="Levy A."/>
            <person name="Martinka S."/>
            <person name="Mead K."/>
            <person name="McLellan M.D."/>
            <person name="Meyer R."/>
            <person name="Randall-Maher J."/>
            <person name="Tomlinson C."/>
            <person name="Dauphin-Kohlberg S."/>
            <person name="Kozlowicz-Reilly A."/>
            <person name="Shah N."/>
            <person name="Swearengen-Shahid S."/>
            <person name="Snider J."/>
            <person name="Strong J.T."/>
            <person name="Thompson J."/>
            <person name="Yoakum M."/>
            <person name="Leonard S."/>
            <person name="Pearman C."/>
            <person name="Trani L."/>
            <person name="Radionenko M."/>
            <person name="Waligorski J.E."/>
            <person name="Wang C."/>
            <person name="Rock S.M."/>
            <person name="Tin-Wollam A.-M."/>
            <person name="Maupin R."/>
            <person name="Latreille P."/>
            <person name="Wendl M.C."/>
            <person name="Yang S.-P."/>
            <person name="Pohl C."/>
            <person name="Wallis J.W."/>
            <person name="Spieth J."/>
            <person name="Bieri T.A."/>
            <person name="Berkowicz N."/>
            <person name="Nelson J.O."/>
            <person name="Osborne J."/>
            <person name="Ding L."/>
            <person name="Meyer R."/>
            <person name="Sabo A."/>
            <person name="Shotland Y."/>
            <person name="Sinha P."/>
            <person name="Wohldmann P.E."/>
            <person name="Cook L.L."/>
            <person name="Hickenbotham M.T."/>
            <person name="Eldred J."/>
            <person name="Williams D."/>
            <person name="Jones T.A."/>
            <person name="She X."/>
            <person name="Ciccarelli F.D."/>
            <person name="Izaurralde E."/>
            <person name="Taylor J."/>
            <person name="Schmutz J."/>
            <person name="Myers R.M."/>
            <person name="Cox D.R."/>
            <person name="Huang X."/>
            <person name="McPherson J.D."/>
            <person name="Mardis E.R."/>
            <person name="Clifton S.W."/>
            <person name="Warren W.C."/>
            <person name="Chinwalla A.T."/>
            <person name="Eddy S.R."/>
            <person name="Marra M.A."/>
            <person name="Ovcharenko I."/>
            <person name="Furey T.S."/>
            <person name="Miller W."/>
            <person name="Eichler E.E."/>
            <person name="Bork P."/>
            <person name="Suyama M."/>
            <person name="Torrents D."/>
            <person name="Waterston R.H."/>
            <person name="Wilson R.K."/>
        </authorList>
    </citation>
    <scope>NUCLEOTIDE SEQUENCE [LARGE SCALE GENOMIC DNA]</scope>
</reference>
<reference key="7">
    <citation type="submission" date="2005-07" db="EMBL/GenBank/DDBJ databases">
        <authorList>
            <person name="Mural R.J."/>
            <person name="Istrail S."/>
            <person name="Sutton G."/>
            <person name="Florea L."/>
            <person name="Halpern A.L."/>
            <person name="Mobarry C.M."/>
            <person name="Lippert R."/>
            <person name="Walenz B."/>
            <person name="Shatkay H."/>
            <person name="Dew I."/>
            <person name="Miller J.R."/>
            <person name="Flanigan M.J."/>
            <person name="Edwards N.J."/>
            <person name="Bolanos R."/>
            <person name="Fasulo D."/>
            <person name="Halldorsson B.V."/>
            <person name="Hannenhalli S."/>
            <person name="Turner R."/>
            <person name="Yooseph S."/>
            <person name="Lu F."/>
            <person name="Nusskern D.R."/>
            <person name="Shue B.C."/>
            <person name="Zheng X.H."/>
            <person name="Zhong F."/>
            <person name="Delcher A.L."/>
            <person name="Huson D.H."/>
            <person name="Kravitz S.A."/>
            <person name="Mouchard L."/>
            <person name="Reinert K."/>
            <person name="Remington K.A."/>
            <person name="Clark A.G."/>
            <person name="Waterman M.S."/>
            <person name="Eichler E.E."/>
            <person name="Adams M.D."/>
            <person name="Hunkapiller M.W."/>
            <person name="Myers E.W."/>
            <person name="Venter J.C."/>
        </authorList>
    </citation>
    <scope>NUCLEOTIDE SEQUENCE [LARGE SCALE GENOMIC DNA]</scope>
    <scope>VARIANT SER-116</scope>
</reference>
<reference key="8">
    <citation type="journal article" date="2004" name="Genome Res.">
        <title>The status, quality, and expansion of the NIH full-length cDNA project: the Mammalian Gene Collection (MGC).</title>
        <authorList>
            <consortium name="The MGC Project Team"/>
        </authorList>
    </citation>
    <scope>NUCLEOTIDE SEQUENCE [LARGE SCALE MRNA] (ISOFORM 1)</scope>
    <source>
        <tissue>Pancreas</tissue>
    </source>
</reference>
<reference key="9">
    <citation type="submission" date="2008-12" db="UniProtKB">
        <authorList>
            <person name="Lubec G."/>
            <person name="Vishwanath V."/>
            <person name="Chen W.-Q."/>
            <person name="Sun Y."/>
        </authorList>
    </citation>
    <scope>PROTEIN SEQUENCE OF 15-39; 91-97; 178-194; 208-225; 267-285 AND 417-426</scope>
    <scope>IDENTIFICATION BY MASS SPECTROMETRY</scope>
    <source>
        <tissue>Brain</tissue>
        <tissue>Cajal-Retzius cell</tissue>
        <tissue>Fetal brain cortex</tissue>
    </source>
</reference>
<reference key="10">
    <citation type="journal article" date="1992" name="Electrophoresis">
        <title>Microsequences of 145 proteins recorded in the two-dimensional gel protein database of normal human epidermal keratinocytes.</title>
        <authorList>
            <person name="Rasmussen H.H."/>
            <person name="van Damme J."/>
            <person name="Puype M."/>
            <person name="Gesser B."/>
            <person name="Celis J.E."/>
            <person name="Vandekerckhove J."/>
        </authorList>
    </citation>
    <scope>PROTEIN SEQUENCE OF 178-189 AND 267-281</scope>
    <source>
        <tissue>Keratinocyte</tissue>
    </source>
</reference>
<reference key="11">
    <citation type="journal article" date="2000" name="Biochemistry">
        <title>Human AICAR transformylase: role of the 4-carboxamide of AICAR in binding and catalysis.</title>
        <authorList>
            <person name="Wall M."/>
            <person name="Shim J.H."/>
            <person name="Benkovic S.J."/>
        </authorList>
    </citation>
    <scope>FUNCTION</scope>
    <scope>CATALYTIC ACTIVITY</scope>
    <scope>BIOPHYSICOCHEMICAL PROPERTIES</scope>
    <scope>ACTIVITY REGULATION</scope>
</reference>
<reference key="12">
    <citation type="journal article" date="2002" name="J. Biol. Chem.">
        <title>The kinetic mechanism of the human bifunctional enzyme ATIC (5-amino-4-imidazolecarboxamide ribonucleotide transformylase/inosine 5'-monophosphate cyclohydrolase). A surprising lack of substrate channeling.</title>
        <authorList>
            <person name="Bulock K.G."/>
            <person name="Beardsley G.P."/>
            <person name="Anderson K.S."/>
        </authorList>
    </citation>
    <scope>FUNCTION</scope>
    <scope>CATALYTIC ACTIVITY</scope>
    <scope>BIOPHYSICOCHEMICAL PROPERTIES</scope>
    <scope>PATHWAY</scope>
</reference>
<reference key="13">
    <citation type="journal article" date="2004" name="Biochemistry">
        <title>Catalytic mechanism of the cyclohydrolase activity of human aminoimidazole carboxamide ribonucleotide formyltransferase/inosine monophosphate cyclohydrolase.</title>
        <authorList>
            <person name="Vergis J.M."/>
            <person name="Beardsley G.P."/>
        </authorList>
    </citation>
    <scope>FUNCTION</scope>
    <scope>CATALYTIC ACTIVITY</scope>
    <scope>BIOPHYSICOCHEMICAL PROPERTIES</scope>
    <scope>MUTAGENESIS OF LYS-66; TYR-104; ASP-125 AND LYS-137</scope>
</reference>
<reference key="14">
    <citation type="journal article" date="2009" name="Anal. Chem.">
        <title>Lys-N and trypsin cover complementary parts of the phosphoproteome in a refined SCX-based approach.</title>
        <authorList>
            <person name="Gauci S."/>
            <person name="Helbig A.O."/>
            <person name="Slijper M."/>
            <person name="Krijgsveld J."/>
            <person name="Heck A.J."/>
            <person name="Mohammed S."/>
        </authorList>
    </citation>
    <scope>ACETYLATION [LARGE SCALE ANALYSIS] AT MET-1</scope>
    <scope>IDENTIFICATION BY MASS SPECTROMETRY [LARGE SCALE ANALYSIS]</scope>
</reference>
<reference key="15">
    <citation type="journal article" date="2009" name="Science">
        <title>Lysine acetylation targets protein complexes and co-regulates major cellular functions.</title>
        <authorList>
            <person name="Choudhary C."/>
            <person name="Kumar C."/>
            <person name="Gnad F."/>
            <person name="Nielsen M.L."/>
            <person name="Rehman M."/>
            <person name="Walther T.C."/>
            <person name="Olsen J.V."/>
            <person name="Mann M."/>
        </authorList>
    </citation>
    <scope>ACETYLATION [LARGE SCALE ANALYSIS] AT LYS-199</scope>
    <scope>IDENTIFICATION BY MASS SPECTROMETRY [LARGE SCALE ANALYSIS]</scope>
</reference>
<reference key="16">
    <citation type="journal article" date="2011" name="BMC Syst. Biol.">
        <title>Initial characterization of the human central proteome.</title>
        <authorList>
            <person name="Burkard T.R."/>
            <person name="Planyavsky M."/>
            <person name="Kaupe I."/>
            <person name="Breitwieser F.P."/>
            <person name="Buerckstuemmer T."/>
            <person name="Bennett K.L."/>
            <person name="Superti-Furga G."/>
            <person name="Colinge J."/>
        </authorList>
    </citation>
    <scope>IDENTIFICATION BY MASS SPECTROMETRY [LARGE SCALE ANALYSIS]</scope>
</reference>
<reference key="17">
    <citation type="journal article" date="2012" name="Mol. Cell. Proteomics">
        <title>Comparative large-scale characterisation of plant vs. mammal proteins reveals similar and idiosyncratic N-alpha acetylation features.</title>
        <authorList>
            <person name="Bienvenut W.V."/>
            <person name="Sumpton D."/>
            <person name="Martinez A."/>
            <person name="Lilla S."/>
            <person name="Espagne C."/>
            <person name="Meinnel T."/>
            <person name="Giglione C."/>
        </authorList>
    </citation>
    <scope>CLEAVAGE OF INITIATOR METHIONINE [LARGE SCALE ANALYSIS]</scope>
    <scope>IDENTIFICATION BY MASS SPECTROMETRY [LARGE SCALE ANALYSIS]</scope>
</reference>
<reference key="18">
    <citation type="journal article" date="2012" name="Proc. Natl. Acad. Sci. U.S.A.">
        <title>N-terminal acetylome analyses and functional insights of the N-terminal acetyltransferase NatB.</title>
        <authorList>
            <person name="Van Damme P."/>
            <person name="Lasa M."/>
            <person name="Polevoda B."/>
            <person name="Gazquez C."/>
            <person name="Elosegui-Artola A."/>
            <person name="Kim D.S."/>
            <person name="De Juan-Pardo E."/>
            <person name="Demeyer K."/>
            <person name="Hole K."/>
            <person name="Larrea E."/>
            <person name="Timmerman E."/>
            <person name="Prieto J."/>
            <person name="Arnesen T."/>
            <person name="Sherman F."/>
            <person name="Gevaert K."/>
            <person name="Aldabe R."/>
        </authorList>
    </citation>
    <scope>IDENTIFICATION BY MASS SPECTROMETRY [LARGE SCALE ANALYSIS]</scope>
</reference>
<reference key="19">
    <citation type="journal article" date="2014" name="J. Proteomics">
        <title>An enzyme assisted RP-RPLC approach for in-depth analysis of human liver phosphoproteome.</title>
        <authorList>
            <person name="Bian Y."/>
            <person name="Song C."/>
            <person name="Cheng K."/>
            <person name="Dong M."/>
            <person name="Wang F."/>
            <person name="Huang J."/>
            <person name="Sun D."/>
            <person name="Wang L."/>
            <person name="Ye M."/>
            <person name="Zou H."/>
        </authorList>
    </citation>
    <scope>IDENTIFICATION BY MASS SPECTROMETRY [LARGE SCALE ANALYSIS]</scope>
    <source>
        <tissue>Liver</tissue>
    </source>
</reference>
<reference key="20">
    <citation type="journal article" date="2015" name="Mol. Cell. Proteomics">
        <title>The last enzyme of the de novo purine synthesis pathway 5-aminoimidazole-4-carboxamide ribonucleotide formyltransferase/IMP cyclohydrolase (ATIC) plays a central role in insulin signaling and the Golgi/endosomes protein network.</title>
        <authorList>
            <person name="Boutchueng-Djidjou M."/>
            <person name="Collard-Simard G."/>
            <person name="Fortier S."/>
            <person name="Hebert S.S."/>
            <person name="Kelly I."/>
            <person name="Landry C.R."/>
            <person name="Faure R.L."/>
        </authorList>
    </citation>
    <scope>FUNCTION</scope>
    <scope>SUBUNIT</scope>
    <scope>INTERACTION WITH ISNR</scope>
</reference>
<reference evidence="29" key="21">
    <citation type="journal article" date="2004" name="Biochemistry">
        <title>Structural insights into the human and avian IMP cyclohydrolase mechanism via crystal structures with the bound XMP inhibitor.</title>
        <authorList>
            <person name="Wolan D.W."/>
            <person name="Cheong C.-G."/>
            <person name="Greasley S.E."/>
            <person name="Wilson I.A."/>
        </authorList>
    </citation>
    <scope>X-RAY CRYSTALLOGRAPHY (1.9 ANGSTROMS) IN COMPLEX WITH XMP</scope>
    <scope>SUBUNIT</scope>
    <scope>ACTIVE SITE</scope>
</reference>
<reference evidence="28 30" key="22">
    <citation type="journal article" date="2004" name="J. Biol. Chem.">
        <title>Crystal structures of human bifunctional enzyme aminoimidazole-4-carboxamide ribonucleotide transformylase/IMP cyclohydrolase in complex with potent sulfonyl-containing antifolates.</title>
        <authorList>
            <person name="Cheong C.-G."/>
            <person name="Wolan D.W."/>
            <person name="Greasley S.E."/>
            <person name="Horton P.A."/>
            <person name="Beardsley G.P."/>
            <person name="Wilson I.A."/>
        </authorList>
    </citation>
    <scope>X-RAY CRYSTALLOGRAPHY (2.55 ANGSTROMS) IN COMPLEXES WITH AICAR; XMP AND THE INHIBITORS BW1540 AND BW2315</scope>
    <scope>SUBUNIT</scope>
    <scope>ACTIVE SITE</scope>
</reference>
<reference evidence="31 32" key="23">
    <citation type="journal article" date="2017" name="J. Med. Chem.">
        <title>Discovery of LSN 3213128, a Potent and Selective Nonclassical Antifolate Aminoimidazole-4-carboxamide Ribonucleotide Formyltransferase (AICARFT) Inhibitor Effective at Tumor Suppression in a Cancer Xenograft Model.</title>
        <authorList>
            <person name="Fales K.R."/>
            <person name="Njoroge F.G."/>
            <person name="Brooks H.B."/>
            <person name="Thibodeaux S."/>
            <person name="Torrado A."/>
            <person name="Si C."/>
            <person name="Toth J.L."/>
            <person name="Mc Cowan J.R."/>
            <person name="Roth K.D."/>
            <person name="Thrasher K.J."/>
            <person name="Frimpong K."/>
            <person name="Lee M.R."/>
            <person name="Dally R.D."/>
            <person name="Shepherd T.A."/>
            <person name="Durham T.B."/>
            <person name="Margolis B.J."/>
            <person name="Wu Z."/>
            <person name="Wang Y."/>
            <person name="Atwell S."/>
            <person name="Wang J."/>
            <person name="Hui Y.H."/>
            <person name="Meier T.I."/>
            <person name="Konicek S.A."/>
            <person name="Geeganage S."/>
        </authorList>
    </citation>
    <scope>X-RAY CRYSTALLOGRAPHY (1.79 ANGSTROMS) OF 2-592 IN COMPLEXES WITH AICAR AND LSN 3213128 INHIBITOR</scope>
    <scope>ACTIVITY REGULATION</scope>
</reference>
<reference key="24">
    <citation type="journal article" date="2004" name="Am. J. Hum. Genet.">
        <title>AICA-ribosiduria: a novel, neurologically devastating inborn error of purine biosynthesis caused by mutation of ATIC.</title>
        <authorList>
            <person name="Marie S."/>
            <person name="Heron B."/>
            <person name="Bitoun P."/>
            <person name="Timmerman T."/>
            <person name="Van Den Berghe G."/>
            <person name="Vincent M.-F."/>
        </authorList>
    </citation>
    <scope>INVOLVEMENT IN AICAR DISEASE</scope>
    <scope>VARIANT AICAR ARG-426</scope>
    <scope>CHARACTERIZATION OF VARIANT AICAR ARG-426</scope>
</reference>
<accession>P31939</accession>
<accession>A8K202</accession>
<accession>E9PBU3</accession>
<accession>Q13856</accession>
<accession>Q53S28</accession>
<evidence type="ECO:0000250" key="1">
    <source>
        <dbReference type="UniProtKB" id="P31335"/>
    </source>
</evidence>
<evidence type="ECO:0000250" key="2">
    <source>
        <dbReference type="UniProtKB" id="P54113"/>
    </source>
</evidence>
<evidence type="ECO:0000255" key="3">
    <source>
        <dbReference type="PROSITE-ProRule" id="PRU01202"/>
    </source>
</evidence>
<evidence type="ECO:0000269" key="4">
    <source>
    </source>
</evidence>
<evidence type="ECO:0000269" key="5">
    <source>
    </source>
</evidence>
<evidence type="ECO:0000269" key="6">
    <source>
    </source>
</evidence>
<evidence type="ECO:0000269" key="7">
    <source>
    </source>
</evidence>
<evidence type="ECO:0000269" key="8">
    <source>
    </source>
</evidence>
<evidence type="ECO:0000269" key="9">
    <source>
    </source>
</evidence>
<evidence type="ECO:0000269" key="10">
    <source>
    </source>
</evidence>
<evidence type="ECO:0000269" key="11">
    <source>
    </source>
</evidence>
<evidence type="ECO:0000269" key="12">
    <source>
    </source>
</evidence>
<evidence type="ECO:0000269" key="13">
    <source>
    </source>
</evidence>
<evidence type="ECO:0000269" key="14">
    <source>
    </source>
</evidence>
<evidence type="ECO:0000269" key="15">
    <source ref="7"/>
</evidence>
<evidence type="ECO:0000303" key="16">
    <source>
    </source>
</evidence>
<evidence type="ECO:0000303" key="17">
    <source>
    </source>
</evidence>
<evidence type="ECO:0000303" key="18">
    <source>
    </source>
</evidence>
<evidence type="ECO:0000303" key="19">
    <source>
    </source>
</evidence>
<evidence type="ECO:0000305" key="20"/>
<evidence type="ECO:0000305" key="21">
    <source>
    </source>
</evidence>
<evidence type="ECO:0000305" key="22">
    <source>
    </source>
</evidence>
<evidence type="ECO:0000305" key="23">
    <source>
    </source>
</evidence>
<evidence type="ECO:0000305" key="24">
    <source>
    </source>
</evidence>
<evidence type="ECO:0000305" key="25">
    <source>
    </source>
</evidence>
<evidence type="ECO:0000305" key="26">
    <source>
    </source>
</evidence>
<evidence type="ECO:0000312" key="27">
    <source>
        <dbReference type="HGNC" id="HGNC:794"/>
    </source>
</evidence>
<evidence type="ECO:0007744" key="28">
    <source>
        <dbReference type="PDB" id="1P4R"/>
    </source>
</evidence>
<evidence type="ECO:0007744" key="29">
    <source>
        <dbReference type="PDB" id="1PKX"/>
    </source>
</evidence>
<evidence type="ECO:0007744" key="30">
    <source>
        <dbReference type="PDB" id="1PL0"/>
    </source>
</evidence>
<evidence type="ECO:0007744" key="31">
    <source>
        <dbReference type="PDB" id="5UY8"/>
    </source>
</evidence>
<evidence type="ECO:0007744" key="32">
    <source>
        <dbReference type="PDB" id="5UZ0"/>
    </source>
</evidence>
<evidence type="ECO:0007744" key="33">
    <source>
    </source>
</evidence>
<evidence type="ECO:0007744" key="34">
    <source>
    </source>
</evidence>
<evidence type="ECO:0007744" key="35">
    <source>
    </source>
</evidence>
<evidence type="ECO:0007829" key="36">
    <source>
        <dbReference type="PDB" id="1P4R"/>
    </source>
</evidence>
<evidence type="ECO:0007829" key="37">
    <source>
        <dbReference type="PDB" id="1PL0"/>
    </source>
</evidence>
<evidence type="ECO:0007829" key="38">
    <source>
        <dbReference type="PDB" id="5UZ0"/>
    </source>
</evidence>
<gene>
    <name evidence="27" type="primary">ATIC</name>
    <name evidence="18" type="synonym">PURH</name>
    <name type="ORF">OK/SW-cl.86</name>
</gene>